<reference key="1">
    <citation type="journal article" date="1993" name="J. Bacteriol.">
        <title>Molecular cloning and nucleotide sequence of a putative trpDC(F)BA operon in Buchnera aphidicola (endosymbiont of the aphid Schizaphis graminum).</title>
        <authorList>
            <person name="Munson M.A."/>
            <person name="Baumann P."/>
        </authorList>
    </citation>
    <scope>NUCLEOTIDE SEQUENCE [GENOMIC DNA]</scope>
</reference>
<reference key="2">
    <citation type="journal article" date="2002" name="Science">
        <title>50 million years of genomic stasis in endosymbiotic bacteria.</title>
        <authorList>
            <person name="Tamas I."/>
            <person name="Klasson L."/>
            <person name="Canbaeck B."/>
            <person name="Naeslund A.K."/>
            <person name="Eriksson A.-S."/>
            <person name="Wernegreen J.J."/>
            <person name="Sandstroem J.P."/>
            <person name="Moran N.A."/>
            <person name="Andersson S.G.E."/>
        </authorList>
    </citation>
    <scope>NUCLEOTIDE SEQUENCE [LARGE SCALE GENOMIC DNA]</scope>
    <source>
        <strain>Sg</strain>
    </source>
</reference>
<comment type="function">
    <text evidence="1">Catalyzes the transfer of the phosphoribosyl group of 5-phosphorylribose-1-pyrophosphate (PRPP) to anthranilate to yield N-(5'-phosphoribosyl)-anthranilate (PRA).</text>
</comment>
<comment type="catalytic activity">
    <reaction evidence="1">
        <text>N-(5-phospho-beta-D-ribosyl)anthranilate + diphosphate = 5-phospho-alpha-D-ribose 1-diphosphate + anthranilate</text>
        <dbReference type="Rhea" id="RHEA:11768"/>
        <dbReference type="ChEBI" id="CHEBI:16567"/>
        <dbReference type="ChEBI" id="CHEBI:18277"/>
        <dbReference type="ChEBI" id="CHEBI:33019"/>
        <dbReference type="ChEBI" id="CHEBI:58017"/>
        <dbReference type="EC" id="2.4.2.18"/>
    </reaction>
</comment>
<comment type="cofactor">
    <cofactor evidence="1">
        <name>Mg(2+)</name>
        <dbReference type="ChEBI" id="CHEBI:18420"/>
    </cofactor>
    <text evidence="1">Binds 2 magnesium ions per monomer.</text>
</comment>
<comment type="pathway">
    <text evidence="1">Amino-acid biosynthesis; L-tryptophan biosynthesis; L-tryptophan from chorismate: step 2/5.</text>
</comment>
<comment type="subunit">
    <text evidence="1">Homodimer.</text>
</comment>
<comment type="similarity">
    <text evidence="1">Belongs to the anthranilate phosphoribosyltransferase family.</text>
</comment>
<accession>P42392</accession>
<evidence type="ECO:0000255" key="1">
    <source>
        <dbReference type="HAMAP-Rule" id="MF_00211"/>
    </source>
</evidence>
<protein>
    <recommendedName>
        <fullName evidence="1">Anthranilate phosphoribosyltransferase</fullName>
        <ecNumber evidence="1">2.4.2.18</ecNumber>
    </recommendedName>
</protein>
<sequence>MQNIFNKIYESKSLNQEESYQLFKSIALGKINEIQLSSILTAMQMHGESEKEILGAIYAFSERMKFFPRPNYIFSDIVGTGGDSKNTINVSTSSAFVAASCGFKIIKHCNKGVSSKSGSSDLLNKFKINLNTSLENSKKILDKLNICFLFAPKYHSVFKYASKTRSILKIKTIFNLLGPFLNPSRPPLTLIGVYKKDLVNPMSRILKKLKYQRGIILHGDDTDEVTLHGTTYISELLNNKIYSYELEPEDFGIKRHSKSIFVEYSPEENYHIIKKTMQGKGEKLHEELIAVNVALLLKIFGHENLKENTKIALKKIRSGDVYKHIMQVSNMLKED</sequence>
<feature type="chain" id="PRO_0000154435" description="Anthranilate phosphoribosyltransferase">
    <location>
        <begin position="1"/>
        <end position="335"/>
    </location>
</feature>
<feature type="binding site" evidence="1">
    <location>
        <position position="79"/>
    </location>
    <ligand>
        <name>5-phospho-alpha-D-ribose 1-diphosphate</name>
        <dbReference type="ChEBI" id="CHEBI:58017"/>
    </ligand>
</feature>
<feature type="binding site" evidence="1">
    <location>
        <position position="79"/>
    </location>
    <ligand>
        <name>anthranilate</name>
        <dbReference type="ChEBI" id="CHEBI:16567"/>
        <label>1</label>
    </ligand>
</feature>
<feature type="binding site" evidence="1">
    <location>
        <begin position="82"/>
        <end position="83"/>
    </location>
    <ligand>
        <name>5-phospho-alpha-D-ribose 1-diphosphate</name>
        <dbReference type="ChEBI" id="CHEBI:58017"/>
    </ligand>
</feature>
<feature type="binding site" evidence="1">
    <location>
        <position position="87"/>
    </location>
    <ligand>
        <name>5-phospho-alpha-D-ribose 1-diphosphate</name>
        <dbReference type="ChEBI" id="CHEBI:58017"/>
    </ligand>
</feature>
<feature type="binding site" evidence="1">
    <location>
        <begin position="89"/>
        <end position="92"/>
    </location>
    <ligand>
        <name>5-phospho-alpha-D-ribose 1-diphosphate</name>
        <dbReference type="ChEBI" id="CHEBI:58017"/>
    </ligand>
</feature>
<feature type="binding site" evidence="1">
    <location>
        <position position="91"/>
    </location>
    <ligand>
        <name>Mg(2+)</name>
        <dbReference type="ChEBI" id="CHEBI:18420"/>
        <label>1</label>
    </ligand>
</feature>
<feature type="binding site" evidence="1">
    <location>
        <begin position="107"/>
        <end position="115"/>
    </location>
    <ligand>
        <name>5-phospho-alpha-D-ribose 1-diphosphate</name>
        <dbReference type="ChEBI" id="CHEBI:58017"/>
    </ligand>
</feature>
<feature type="binding site" evidence="1">
    <location>
        <position position="110"/>
    </location>
    <ligand>
        <name>anthranilate</name>
        <dbReference type="ChEBI" id="CHEBI:16567"/>
        <label>1</label>
    </ligand>
</feature>
<feature type="binding site" evidence="1">
    <location>
        <position position="119"/>
    </location>
    <ligand>
        <name>5-phospho-alpha-D-ribose 1-diphosphate</name>
        <dbReference type="ChEBI" id="CHEBI:58017"/>
    </ligand>
</feature>
<feature type="binding site" evidence="1">
    <location>
        <position position="165"/>
    </location>
    <ligand>
        <name>anthranilate</name>
        <dbReference type="ChEBI" id="CHEBI:16567"/>
        <label>2</label>
    </ligand>
</feature>
<feature type="binding site" evidence="1">
    <location>
        <position position="223"/>
    </location>
    <ligand>
        <name>Mg(2+)</name>
        <dbReference type="ChEBI" id="CHEBI:18420"/>
        <label>2</label>
    </ligand>
</feature>
<feature type="binding site" evidence="1">
    <location>
        <position position="224"/>
    </location>
    <ligand>
        <name>Mg(2+)</name>
        <dbReference type="ChEBI" id="CHEBI:18420"/>
        <label>1</label>
    </ligand>
</feature>
<feature type="binding site" evidence="1">
    <location>
        <position position="224"/>
    </location>
    <ligand>
        <name>Mg(2+)</name>
        <dbReference type="ChEBI" id="CHEBI:18420"/>
        <label>2</label>
    </ligand>
</feature>
<gene>
    <name evidence="1" type="primary">trpD</name>
    <name type="ordered locus">BUsg_269</name>
</gene>
<proteinExistence type="inferred from homology"/>
<organism>
    <name type="scientific">Buchnera aphidicola subsp. Schizaphis graminum (strain Sg)</name>
    <dbReference type="NCBI Taxonomy" id="198804"/>
    <lineage>
        <taxon>Bacteria</taxon>
        <taxon>Pseudomonadati</taxon>
        <taxon>Pseudomonadota</taxon>
        <taxon>Gammaproteobacteria</taxon>
        <taxon>Enterobacterales</taxon>
        <taxon>Erwiniaceae</taxon>
        <taxon>Buchnera</taxon>
    </lineage>
</organism>
<keyword id="KW-0028">Amino-acid biosynthesis</keyword>
<keyword id="KW-0057">Aromatic amino acid biosynthesis</keyword>
<keyword id="KW-0328">Glycosyltransferase</keyword>
<keyword id="KW-0460">Magnesium</keyword>
<keyword id="KW-0479">Metal-binding</keyword>
<keyword id="KW-0808">Transferase</keyword>
<keyword id="KW-0822">Tryptophan biosynthesis</keyword>
<name>TRPD_BUCAP</name>
<dbReference type="EC" id="2.4.2.18" evidence="1"/>
<dbReference type="EMBL" id="Z19055">
    <property type="protein sequence ID" value="CAA79498.1"/>
    <property type="molecule type" value="Genomic_DNA"/>
</dbReference>
<dbReference type="EMBL" id="AE013218">
    <property type="protein sequence ID" value="AAM67827.1"/>
    <property type="molecule type" value="Genomic_DNA"/>
</dbReference>
<dbReference type="PIR" id="A49897">
    <property type="entry name" value="A49897"/>
</dbReference>
<dbReference type="RefSeq" id="WP_011053794.1">
    <property type="nucleotide sequence ID" value="NC_004061.1"/>
</dbReference>
<dbReference type="SMR" id="P42392"/>
<dbReference type="STRING" id="198804.BUsg_269"/>
<dbReference type="GeneID" id="93003739"/>
<dbReference type="KEGG" id="bas:BUsg_269"/>
<dbReference type="eggNOG" id="COG0547">
    <property type="taxonomic scope" value="Bacteria"/>
</dbReference>
<dbReference type="HOGENOM" id="CLU_034315_3_0_6"/>
<dbReference type="UniPathway" id="UPA00035">
    <property type="reaction ID" value="UER00041"/>
</dbReference>
<dbReference type="Proteomes" id="UP000000416">
    <property type="component" value="Chromosome"/>
</dbReference>
<dbReference type="GO" id="GO:0005829">
    <property type="term" value="C:cytosol"/>
    <property type="evidence" value="ECO:0007669"/>
    <property type="project" value="TreeGrafter"/>
</dbReference>
<dbReference type="GO" id="GO:0004048">
    <property type="term" value="F:anthranilate phosphoribosyltransferase activity"/>
    <property type="evidence" value="ECO:0007669"/>
    <property type="project" value="UniProtKB-UniRule"/>
</dbReference>
<dbReference type="GO" id="GO:0000287">
    <property type="term" value="F:magnesium ion binding"/>
    <property type="evidence" value="ECO:0007669"/>
    <property type="project" value="UniProtKB-UniRule"/>
</dbReference>
<dbReference type="GO" id="GO:0000162">
    <property type="term" value="P:L-tryptophan biosynthetic process"/>
    <property type="evidence" value="ECO:0007669"/>
    <property type="project" value="UniProtKB-UniRule"/>
</dbReference>
<dbReference type="Gene3D" id="3.40.1030.10">
    <property type="entry name" value="Nucleoside phosphorylase/phosphoribosyltransferase catalytic domain"/>
    <property type="match status" value="1"/>
</dbReference>
<dbReference type="Gene3D" id="1.20.970.10">
    <property type="entry name" value="Transferase, Pyrimidine Nucleoside Phosphorylase, Chain C"/>
    <property type="match status" value="1"/>
</dbReference>
<dbReference type="HAMAP" id="MF_00211">
    <property type="entry name" value="TrpD"/>
    <property type="match status" value="1"/>
</dbReference>
<dbReference type="InterPro" id="IPR005940">
    <property type="entry name" value="Anthranilate_Pribosyl_Tfrase"/>
</dbReference>
<dbReference type="InterPro" id="IPR000312">
    <property type="entry name" value="Glycosyl_Trfase_fam3"/>
</dbReference>
<dbReference type="InterPro" id="IPR017459">
    <property type="entry name" value="Glycosyl_Trfase_fam3_N_dom"/>
</dbReference>
<dbReference type="InterPro" id="IPR036320">
    <property type="entry name" value="Glycosyl_Trfase_fam3_N_dom_sf"/>
</dbReference>
<dbReference type="InterPro" id="IPR035902">
    <property type="entry name" value="Nuc_phospho_transferase"/>
</dbReference>
<dbReference type="NCBIfam" id="TIGR01245">
    <property type="entry name" value="trpD"/>
    <property type="match status" value="1"/>
</dbReference>
<dbReference type="PANTHER" id="PTHR43285">
    <property type="entry name" value="ANTHRANILATE PHOSPHORIBOSYLTRANSFERASE"/>
    <property type="match status" value="1"/>
</dbReference>
<dbReference type="PANTHER" id="PTHR43285:SF2">
    <property type="entry name" value="ANTHRANILATE PHOSPHORIBOSYLTRANSFERASE"/>
    <property type="match status" value="1"/>
</dbReference>
<dbReference type="Pfam" id="PF02885">
    <property type="entry name" value="Glycos_trans_3N"/>
    <property type="match status" value="1"/>
</dbReference>
<dbReference type="Pfam" id="PF00591">
    <property type="entry name" value="Glycos_transf_3"/>
    <property type="match status" value="1"/>
</dbReference>
<dbReference type="SUPFAM" id="SSF52418">
    <property type="entry name" value="Nucleoside phosphorylase/phosphoribosyltransferase catalytic domain"/>
    <property type="match status" value="1"/>
</dbReference>
<dbReference type="SUPFAM" id="SSF47648">
    <property type="entry name" value="Nucleoside phosphorylase/phosphoribosyltransferase N-terminal domain"/>
    <property type="match status" value="1"/>
</dbReference>